<keyword id="KW-1015">Disulfide bond</keyword>
<keyword id="KW-0325">Glycoprotein</keyword>
<keyword id="KW-0391">Immunity</keyword>
<keyword id="KW-0472">Membrane</keyword>
<keyword id="KW-0490">MHC I</keyword>
<keyword id="KW-0597">Phosphoprotein</keyword>
<keyword id="KW-1185">Reference proteome</keyword>
<keyword id="KW-0732">Signal</keyword>
<keyword id="KW-0812">Transmembrane</keyword>
<keyword id="KW-1133">Transmembrane helix</keyword>
<dbReference type="EMBL" id="M30678">
    <property type="protein sequence ID" value="AAA87970.1"/>
    <property type="molecule type" value="mRNA"/>
</dbReference>
<dbReference type="EMBL" id="AF168394">
    <property type="protein sequence ID" value="AAF72775.1"/>
    <property type="molecule type" value="mRNA"/>
</dbReference>
<dbReference type="PIR" id="I36961">
    <property type="entry name" value="I36961"/>
</dbReference>
<dbReference type="SMR" id="P16209"/>
<dbReference type="FunCoup" id="P16209">
    <property type="interactions" value="856"/>
</dbReference>
<dbReference type="InParanoid" id="P16209"/>
<dbReference type="Proteomes" id="UP000002277">
    <property type="component" value="Unplaced"/>
</dbReference>
<dbReference type="GO" id="GO:0031901">
    <property type="term" value="C:early endosome membrane"/>
    <property type="evidence" value="ECO:0007669"/>
    <property type="project" value="UniProtKB-ARBA"/>
</dbReference>
<dbReference type="GO" id="GO:0012507">
    <property type="term" value="C:ER to Golgi transport vesicle membrane"/>
    <property type="evidence" value="ECO:0007669"/>
    <property type="project" value="UniProtKB-ARBA"/>
</dbReference>
<dbReference type="GO" id="GO:0009897">
    <property type="term" value="C:external side of plasma membrane"/>
    <property type="evidence" value="ECO:0000318"/>
    <property type="project" value="GO_Central"/>
</dbReference>
<dbReference type="GO" id="GO:0005615">
    <property type="term" value="C:extracellular space"/>
    <property type="evidence" value="ECO:0000318"/>
    <property type="project" value="GO_Central"/>
</dbReference>
<dbReference type="GO" id="GO:0098553">
    <property type="term" value="C:lumenal side of endoplasmic reticulum membrane"/>
    <property type="evidence" value="ECO:0007669"/>
    <property type="project" value="UniProtKB-ARBA"/>
</dbReference>
<dbReference type="GO" id="GO:0042612">
    <property type="term" value="C:MHC class I protein complex"/>
    <property type="evidence" value="ECO:0007669"/>
    <property type="project" value="UniProtKB-KW"/>
</dbReference>
<dbReference type="GO" id="GO:0030670">
    <property type="term" value="C:phagocytic vesicle membrane"/>
    <property type="evidence" value="ECO:0007669"/>
    <property type="project" value="UniProtKB-ARBA"/>
</dbReference>
<dbReference type="GO" id="GO:0055038">
    <property type="term" value="C:recycling endosome membrane"/>
    <property type="evidence" value="ECO:0007669"/>
    <property type="project" value="UniProtKB-ARBA"/>
</dbReference>
<dbReference type="GO" id="GO:0042605">
    <property type="term" value="F:peptide antigen binding"/>
    <property type="evidence" value="ECO:0000318"/>
    <property type="project" value="GO_Central"/>
</dbReference>
<dbReference type="GO" id="GO:0005102">
    <property type="term" value="F:signaling receptor binding"/>
    <property type="evidence" value="ECO:0000318"/>
    <property type="project" value="GO_Central"/>
</dbReference>
<dbReference type="GO" id="GO:0002486">
    <property type="term" value="P:antigen processing and presentation of endogenous peptide antigen via MHC class I via ER pathway, TAP-independent"/>
    <property type="evidence" value="ECO:0000318"/>
    <property type="project" value="GO_Central"/>
</dbReference>
<dbReference type="GO" id="GO:0002476">
    <property type="term" value="P:antigen processing and presentation of endogenous peptide antigen via MHC class Ib"/>
    <property type="evidence" value="ECO:0000318"/>
    <property type="project" value="GO_Central"/>
</dbReference>
<dbReference type="GO" id="GO:0006955">
    <property type="term" value="P:immune response"/>
    <property type="evidence" value="ECO:0000318"/>
    <property type="project" value="GO_Central"/>
</dbReference>
<dbReference type="GO" id="GO:0001916">
    <property type="term" value="P:positive regulation of T cell mediated cytotoxicity"/>
    <property type="evidence" value="ECO:0000318"/>
    <property type="project" value="GO_Central"/>
</dbReference>
<dbReference type="CDD" id="cd21026">
    <property type="entry name" value="IgC1_MHC_Ia_HLA-B"/>
    <property type="match status" value="1"/>
</dbReference>
<dbReference type="FunFam" id="2.60.40.10:FF:000014">
    <property type="entry name" value="H-2 class I histocompatibility antigen, alpha chain"/>
    <property type="match status" value="1"/>
</dbReference>
<dbReference type="FunFam" id="3.30.500.10:FF:000001">
    <property type="entry name" value="H-2 class I histocompatibility antigen, alpha chain"/>
    <property type="match status" value="1"/>
</dbReference>
<dbReference type="Gene3D" id="2.60.40.10">
    <property type="entry name" value="Immunoglobulins"/>
    <property type="match status" value="1"/>
</dbReference>
<dbReference type="Gene3D" id="3.30.500.10">
    <property type="entry name" value="MHC class I-like antigen recognition-like"/>
    <property type="match status" value="1"/>
</dbReference>
<dbReference type="InterPro" id="IPR007110">
    <property type="entry name" value="Ig-like_dom"/>
</dbReference>
<dbReference type="InterPro" id="IPR036179">
    <property type="entry name" value="Ig-like_dom_sf"/>
</dbReference>
<dbReference type="InterPro" id="IPR013783">
    <property type="entry name" value="Ig-like_fold"/>
</dbReference>
<dbReference type="InterPro" id="IPR003006">
    <property type="entry name" value="Ig/MHC_CS"/>
</dbReference>
<dbReference type="InterPro" id="IPR003597">
    <property type="entry name" value="Ig_C1-set"/>
</dbReference>
<dbReference type="InterPro" id="IPR050208">
    <property type="entry name" value="MHC_class-I_related"/>
</dbReference>
<dbReference type="InterPro" id="IPR011161">
    <property type="entry name" value="MHC_I-like_Ag-recog"/>
</dbReference>
<dbReference type="InterPro" id="IPR037055">
    <property type="entry name" value="MHC_I-like_Ag-recog_sf"/>
</dbReference>
<dbReference type="InterPro" id="IPR011162">
    <property type="entry name" value="MHC_I/II-like_Ag-recog"/>
</dbReference>
<dbReference type="InterPro" id="IPR001039">
    <property type="entry name" value="MHC_I_a_a1/a2"/>
</dbReference>
<dbReference type="InterPro" id="IPR010579">
    <property type="entry name" value="MHC_I_a_C"/>
</dbReference>
<dbReference type="PANTHER" id="PTHR16675:SF229">
    <property type="entry name" value="HLA CLASS I HISTOCOMPATIBILITY ANTIGEN, A ALPHA CHAIN"/>
    <property type="match status" value="1"/>
</dbReference>
<dbReference type="PANTHER" id="PTHR16675">
    <property type="entry name" value="MHC CLASS I-RELATED"/>
    <property type="match status" value="1"/>
</dbReference>
<dbReference type="Pfam" id="PF07654">
    <property type="entry name" value="C1-set"/>
    <property type="match status" value="1"/>
</dbReference>
<dbReference type="Pfam" id="PF00129">
    <property type="entry name" value="MHC_I"/>
    <property type="match status" value="1"/>
</dbReference>
<dbReference type="Pfam" id="PF06623">
    <property type="entry name" value="MHC_I_C"/>
    <property type="match status" value="1"/>
</dbReference>
<dbReference type="PRINTS" id="PR01638">
    <property type="entry name" value="MHCCLASSI"/>
</dbReference>
<dbReference type="SMART" id="SM00407">
    <property type="entry name" value="IGc1"/>
    <property type="match status" value="1"/>
</dbReference>
<dbReference type="SUPFAM" id="SSF48726">
    <property type="entry name" value="Immunoglobulin"/>
    <property type="match status" value="1"/>
</dbReference>
<dbReference type="SUPFAM" id="SSF54452">
    <property type="entry name" value="MHC antigen-recognition domain"/>
    <property type="match status" value="1"/>
</dbReference>
<dbReference type="PROSITE" id="PS50835">
    <property type="entry name" value="IG_LIKE"/>
    <property type="match status" value="1"/>
</dbReference>
<dbReference type="PROSITE" id="PS00290">
    <property type="entry name" value="IG_MHC"/>
    <property type="match status" value="1"/>
</dbReference>
<name>1A01_PANTR</name>
<organism>
    <name type="scientific">Pan troglodytes</name>
    <name type="common">Chimpanzee</name>
    <dbReference type="NCBI Taxonomy" id="9598"/>
    <lineage>
        <taxon>Eukaryota</taxon>
        <taxon>Metazoa</taxon>
        <taxon>Chordata</taxon>
        <taxon>Craniata</taxon>
        <taxon>Vertebrata</taxon>
        <taxon>Euteleostomi</taxon>
        <taxon>Mammalia</taxon>
        <taxon>Eutheria</taxon>
        <taxon>Euarchontoglires</taxon>
        <taxon>Primates</taxon>
        <taxon>Haplorrhini</taxon>
        <taxon>Catarrhini</taxon>
        <taxon>Hominidae</taxon>
        <taxon>Pan</taxon>
    </lineage>
</organism>
<protein>
    <recommendedName>
        <fullName>Patr class I histocompatibility antigen, A-2 alpha chain</fullName>
    </recommendedName>
    <alternativeName>
        <fullName>ChLa class I histocompatibility antigen, A-2 alpha chain</fullName>
    </alternativeName>
</protein>
<comment type="function">
    <text>Involved in the presentation of foreign antigens to the immune system.</text>
</comment>
<comment type="subunit">
    <text>Heterodimer of an alpha chain and a beta chain (beta-2-microglobulin).</text>
</comment>
<comment type="subcellular location">
    <subcellularLocation>
        <location>Membrane</location>
        <topology>Single-pass type I membrane protein</topology>
    </subcellularLocation>
</comment>
<comment type="similarity">
    <text evidence="8">Belongs to the MHC class I family.</text>
</comment>
<sequence>MAVMPPRTLLLLLSGALALTQTWAGSHSMRYFFTSVSRPGRGEPRFIAVGYVDDTQFVRFDSDAASQRMEPRAPWIEQEGPEYWDEETRSAKAHSQTDRVDLGTLRGYYNQSEDGSHTIQIMYGCDVGSDGRFLRGYRQDAYDGKDYIALNEDLRSWTAADMAAQITKRKWEAAHAAEQRRAYLEGTCVEWLRRYLENGKETLQRTDPPKTHMTHHPISDHEATLRCWALGFYPAEITLTWQRDGEDQTQDTELVETRPAGDGTFQKWAAVVVPSGEEQRYTCHVQHEGLPKPLTLRWEPSSQPTIPIVGIIAGLVLLGAVITGAVVAAVMWRRKSSDRKGGSYTQAASSDSAQGSDVSLTACKV</sequence>
<proteinExistence type="evidence at transcript level"/>
<feature type="signal peptide" evidence="1">
    <location>
        <begin position="1"/>
        <end position="24"/>
    </location>
</feature>
<feature type="chain" id="PRO_0000018910" description="Patr class I histocompatibility antigen, A-2 alpha chain">
    <location>
        <begin position="25"/>
        <end position="365"/>
    </location>
</feature>
<feature type="topological domain" description="Extracellular" evidence="5">
    <location>
        <begin position="25"/>
        <end position="308"/>
    </location>
</feature>
<feature type="transmembrane region" description="Helical" evidence="5">
    <location>
        <begin position="309"/>
        <end position="332"/>
    </location>
</feature>
<feature type="topological domain" description="Cytoplasmic" evidence="5">
    <location>
        <begin position="333"/>
        <end position="365"/>
    </location>
</feature>
<feature type="domain" description="Ig-like C1-type">
    <location>
        <begin position="209"/>
        <end position="295"/>
    </location>
</feature>
<feature type="region of interest" description="Alpha-1">
    <location>
        <begin position="25"/>
        <end position="114"/>
    </location>
</feature>
<feature type="region of interest" description="Alpha-2">
    <location>
        <begin position="115"/>
        <end position="206"/>
    </location>
</feature>
<feature type="region of interest" description="Alpha-3">
    <location>
        <begin position="207"/>
        <end position="298"/>
    </location>
</feature>
<feature type="region of interest" description="Connecting peptide">
    <location>
        <begin position="299"/>
        <end position="308"/>
    </location>
</feature>
<feature type="region of interest" description="Disordered" evidence="7">
    <location>
        <begin position="339"/>
        <end position="360"/>
    </location>
</feature>
<feature type="compositionally biased region" description="Low complexity" evidence="7">
    <location>
        <begin position="346"/>
        <end position="359"/>
    </location>
</feature>
<feature type="modified residue" description="Phosphoserine" evidence="3">
    <location>
        <position position="343"/>
    </location>
</feature>
<feature type="modified residue" description="Phosphotyrosine" evidence="3">
    <location>
        <position position="344"/>
    </location>
</feature>
<feature type="modified residue" description="Phosphoserine" evidence="3">
    <location>
        <position position="349"/>
    </location>
</feature>
<feature type="modified residue" description="Phosphoserine" evidence="2">
    <location>
        <position position="350"/>
    </location>
</feature>
<feature type="modified residue" description="Phosphoserine" evidence="4">
    <location>
        <position position="352"/>
    </location>
</feature>
<feature type="modified residue" description="Phosphoserine" evidence="4">
    <location>
        <position position="356"/>
    </location>
</feature>
<feature type="modified residue" description="Phosphoserine" evidence="4">
    <location>
        <position position="359"/>
    </location>
</feature>
<feature type="glycosylation site" description="N-linked (GlcNAc...) asparagine" evidence="1">
    <location>
        <position position="110"/>
    </location>
</feature>
<feature type="disulfide bond" evidence="6">
    <location>
        <begin position="125"/>
        <end position="188"/>
    </location>
</feature>
<feature type="disulfide bond" evidence="6">
    <location>
        <begin position="227"/>
        <end position="283"/>
    </location>
</feature>
<evidence type="ECO:0000250" key="1"/>
<evidence type="ECO:0000250" key="2">
    <source>
        <dbReference type="UniProtKB" id="P04439"/>
    </source>
</evidence>
<evidence type="ECO:0000250" key="3">
    <source>
        <dbReference type="UniProtKB" id="P18462"/>
    </source>
</evidence>
<evidence type="ECO:0000250" key="4">
    <source>
        <dbReference type="UniProtKB" id="P30443"/>
    </source>
</evidence>
<evidence type="ECO:0000255" key="5"/>
<evidence type="ECO:0000255" key="6">
    <source>
        <dbReference type="PROSITE-ProRule" id="PRU00114"/>
    </source>
</evidence>
<evidence type="ECO:0000256" key="7">
    <source>
        <dbReference type="SAM" id="MobiDB-lite"/>
    </source>
</evidence>
<evidence type="ECO:0000305" key="8"/>
<reference key="1">
    <citation type="journal article" date="1990" name="Immunol. Rev.">
        <title>Comparison of class I MHC alleles in humans and apes.</title>
        <authorList>
            <person name="Lawlor D.A."/>
            <person name="Warren E."/>
            <person name="Ward F.E."/>
            <person name="Parham P."/>
        </authorList>
    </citation>
    <scope>NUCLEOTIDE SEQUENCE [MRNA]</scope>
</reference>
<reference key="2">
    <citation type="journal article" date="2000" name="Immunogenetics">
        <title>Major histocompatibility complex class I diversity in a West African chimpanzee population: implications for HIV research.</title>
        <authorList>
            <person name="de Groot N.G."/>
            <person name="Otting N."/>
            <person name="Arguello R."/>
            <person name="Watkins D.I."/>
            <person name="Doxiadis G.G."/>
            <person name="Madrigal J.A."/>
            <person name="Bontrop R.E."/>
        </authorList>
    </citation>
    <scope>NUCLEOTIDE SEQUENCE [MRNA]</scope>
    <source>
        <tissue>Blood</tissue>
    </source>
</reference>
<accession>P16209</accession>
<accession>Q549C1</accession>